<sequence>MQLSMSFLIGFGTLVLALSARTFDLQGLSCNTDSTPGLIDLEIRRLCHTPTENVISCEVRYLNHTTINLPAVHTSCLKYHCKTYWGFFGSYSADRIINRYTGTVKGCLNNSAPEDPFECNWFYCCSAITTEICRCSITNVTVAVQTFPPFMYCSFADCSTVSQQELESGKAMLSDGSTLTYTPYILQSEVVNKTLNGTILCNSSSKIVSFDEFRRSYSLANGSYQSSSINVTCVNYTSSCRPRLKRRRRDTQQIEYLVHKLRPTLKDAWEDCEILQSLLLGVFGTGIASASQFLRGWLNHPDIIGYIVNGVGVVWQCHRVNVTFMAWNESTYYPPVDYNGRKYFLNDEGRLQTNTPEARPGLKRVMWFGRYFLGTVGSGVKPRRIRYNKTSHDYHLEEFEASLNMTPQTSIASGHETDPINHAYGTQADLLPYTRSSNITSTDTGSGWVHIGLPSFAFLNPLGWLRDLLAWAAWLGGVLYLISLCVSLPASFARRRRLGRWQE</sequence>
<accession>Q8BB27</accession>
<accession>Q88626</accession>
<comment type="function">
    <text evidence="3">Unprocessed envelope protein p57 is thought to be involved in attachment of the virus to its cell surface receptor. This attachment induces virion internalization predominantly through clathrin-dependent endocytosis.</text>
</comment>
<comment type="function">
    <text evidence="3">Envelope protein p27 and p29 presumably linked by disulfide bond are the viral type II fusion protein, involved in pH-dependent fusion within early endosomes after internalization of the virion by endocytosis.</text>
</comment>
<comment type="subcellular location">
    <molecule>Envelope glycoprotein p57</molecule>
    <subcellularLocation>
        <location>Host endoplasmic reticulum membrane</location>
        <topology>Single-pass type I membrane protein</topology>
    </subcellularLocation>
    <text evidence="1">Accumulates in the endoplasmic reticulum when unprocessed, whereas cleaved products reaches cell surface.</text>
</comment>
<comment type="subcellular location">
    <molecule>Envelope glycoprotein p27</molecule>
    <subcellularLocation>
        <location>Virion</location>
    </subcellularLocation>
    <subcellularLocation>
        <location>Host cell membrane</location>
        <topology>Peripheral membrane protein</topology>
    </subcellularLocation>
    <text evidence="1">Appear to be associated with infectious virions.</text>
</comment>
<comment type="subcellular location">
    <molecule>Envelope glycoprotein p29</molecule>
    <subcellularLocation>
        <location>Virion</location>
    </subcellularLocation>
    <subcellularLocation>
        <location>Host cell membrane</location>
        <topology>Single-pass type I membrane protein</topology>
    </subcellularLocation>
    <text evidence="1">Appear to be associated with infectious virions.</text>
</comment>
<comment type="alternative products">
    <event type="alternative splicing"/>
    <isoform>
        <id>Q8BB27-1</id>
        <name>Envelope glycoprotein p57 precursor</name>
        <sequence type="displayed"/>
    </isoform>
    <isoform>
        <id>P0C794-1</id>
        <name>Matrix protein</name>
        <sequence type="external"/>
    </isoform>
    <isoform>
        <id>Q8JMN0-1</id>
        <name>Large structural protein</name>
        <sequence type="external"/>
    </isoform>
</comment>
<comment type="PTM">
    <text>Glycosated; Stabilizes it.</text>
</comment>
<comment type="PTM">
    <text evidence="4">A portion of p57 is cleaved into p27 and p29. p27 and p29 are called gp43 when glycosylated, as they seem to have the same molecular weight.</text>
</comment>
<gene>
    <name type="primary">G</name>
</gene>
<reference key="1">
    <citation type="journal article" date="1994" name="J. Virol.">
        <title>Sequence and genome organization of Borna disease virus.</title>
        <authorList>
            <person name="Cubitt B."/>
            <person name="Oldstone C."/>
            <person name="de la Torre J.C."/>
        </authorList>
    </citation>
    <scope>NUCLEOTIDE SEQUENCE [GENOMIC RNA]</scope>
</reference>
<reference key="2">
    <citation type="journal article" date="2002" name="J. Virol.">
        <title>Persistence of Borna disease virus in naturally infected sheep.</title>
        <authorList>
            <person name="Vahlenkamp T.W."/>
            <person name="Konrath A."/>
            <person name="Weber M."/>
            <person name="Muller H."/>
        </authorList>
    </citation>
    <scope>NUCLEOTIDE SEQUENCE [GENOMIC RNA]</scope>
</reference>
<reference key="3">
    <citation type="journal article" date="1998" name="J. Virol.">
        <title>Processing of the Borna disease virus glycoprotein gp94 by the subtilisin-like endoprotease furin.</title>
        <authorList>
            <person name="Richt J.A."/>
            <person name="Furbringer T."/>
            <person name="Koch A."/>
            <person name="Pfeuffer I."/>
            <person name="Herden C."/>
            <person name="Bause-Niedrig I."/>
            <person name="Garten W."/>
        </authorList>
    </citation>
    <scope>CLEAVAGE BY HOST FURIN</scope>
    <source>
        <strain>isolate H640</strain>
    </source>
</reference>
<reference key="4">
    <citation type="journal article" date="2009" name="J. Virol.">
        <title>Cell entry of Borna disease virus follows a clathrin-mediated endocytosis pathway that requires Rab5 and microtubules.</title>
        <authorList>
            <person name="Clemente R."/>
            <person name="de la Torre J.C."/>
        </authorList>
    </citation>
    <scope>FUNCTION</scope>
    <source>
        <strain>He80</strain>
    </source>
</reference>
<reference key="5">
    <citation type="journal article" date="2002" name="Front. Biosci.">
        <title>Borna disease virus and infection in humans.</title>
        <authorList>
            <person name="Ikuta K."/>
            <person name="Ibrahim M.S."/>
            <person name="Kobayashi T."/>
            <person name="Tomonaga K."/>
        </authorList>
    </citation>
    <scope>REVIEW</scope>
</reference>
<organism>
    <name type="scientific">Borna disease virus 1</name>
    <name type="common">BoDV-1</name>
    <dbReference type="NCBI Taxonomy" id="1714621"/>
    <lineage>
        <taxon>Viruses</taxon>
        <taxon>Riboviria</taxon>
        <taxon>Orthornavirae</taxon>
        <taxon>Negarnaviricota</taxon>
        <taxon>Haploviricotina</taxon>
        <taxon>Monjiviricetes</taxon>
        <taxon>Mononegavirales</taxon>
        <taxon>Bornaviridae</taxon>
        <taxon>Orthobornavirus</taxon>
        <taxon>Orthobornavirus bornaense</taxon>
    </lineage>
</organism>
<proteinExistence type="evidence at protein level"/>
<keyword id="KW-0025">Alternative splicing</keyword>
<keyword id="KW-1165">Clathrin-mediated endocytosis of virus by host</keyword>
<keyword id="KW-0165">Cleavage on pair of basic residues</keyword>
<keyword id="KW-1170">Fusion of virus membrane with host endosomal membrane</keyword>
<keyword id="KW-1168">Fusion of virus membrane with host membrane</keyword>
<keyword id="KW-0325">Glycoprotein</keyword>
<keyword id="KW-1032">Host cell membrane</keyword>
<keyword id="KW-1038">Host endoplasmic reticulum</keyword>
<keyword id="KW-1043">Host membrane</keyword>
<keyword id="KW-0945">Host-virus interaction</keyword>
<keyword id="KW-0472">Membrane</keyword>
<keyword id="KW-0732">Signal</keyword>
<keyword id="KW-0812">Transmembrane</keyword>
<keyword id="KW-1133">Transmembrane helix</keyword>
<keyword id="KW-1161">Viral attachment to host cell</keyword>
<keyword id="KW-0261">Viral envelope protein</keyword>
<keyword id="KW-1162">Viral penetration into host cytoplasm</keyword>
<keyword id="KW-0946">Virion</keyword>
<keyword id="KW-1164">Virus endocytosis by host</keyword>
<keyword id="KW-1160">Virus entry into host cell</keyword>
<feature type="signal peptide" evidence="2">
    <location>
        <begin position="1"/>
        <end position="22"/>
    </location>
</feature>
<feature type="chain" id="PRO_0000405346" description="Envelope glycoprotein p57">
    <location>
        <begin position="23"/>
        <end position="503"/>
    </location>
</feature>
<feature type="chain" id="PRO_0000405347" description="Envelope glycoprotein p27">
    <location>
        <begin position="23"/>
        <end position="249"/>
    </location>
</feature>
<feature type="chain" id="PRO_0000405348" description="Envelope glycoprotein p29">
    <location>
        <begin position="250"/>
        <end position="503"/>
    </location>
</feature>
<feature type="topological domain" description="Extracellular" evidence="2">
    <location>
        <begin position="23"/>
        <end position="467"/>
    </location>
</feature>
<feature type="transmembrane region" description="Helical" evidence="2">
    <location>
        <begin position="468"/>
        <end position="488"/>
    </location>
</feature>
<feature type="topological domain" description="Cytoplasmic" evidence="2">
    <location>
        <begin position="489"/>
        <end position="503"/>
    </location>
</feature>
<feature type="region of interest" description="Fusion peptide" evidence="2">
    <location>
        <begin position="274"/>
        <end position="315"/>
    </location>
</feature>
<feature type="site" description="Cleavage; by host furin">
    <location>
        <begin position="249"/>
        <end position="250"/>
    </location>
</feature>
<feature type="glycosylation site" description="N-linked (GlcNAc...) asparagine; by host" evidence="2">
    <location>
        <position position="63"/>
    </location>
</feature>
<feature type="glycosylation site" description="N-linked (GlcNAc...) asparagine; by host" evidence="2">
    <location>
        <position position="109"/>
    </location>
</feature>
<feature type="glycosylation site" description="N-linked (GlcNAc...) asparagine; by host" evidence="2">
    <location>
        <position position="139"/>
    </location>
</feature>
<feature type="glycosylation site" description="N-linked (GlcNAc...) asparagine; by host" evidence="2">
    <location>
        <position position="192"/>
    </location>
</feature>
<feature type="glycosylation site" description="N-linked (GlcNAc...) asparagine; by host" evidence="2">
    <location>
        <position position="196"/>
    </location>
</feature>
<feature type="glycosylation site" description="N-linked (GlcNAc...) asparagine; by host" evidence="2">
    <location>
        <position position="202"/>
    </location>
</feature>
<feature type="glycosylation site" description="N-linked (GlcNAc...) asparagine; by host" evidence="2">
    <location>
        <position position="221"/>
    </location>
</feature>
<feature type="glycosylation site" description="N-linked (GlcNAc...) asparagine; by host" evidence="2">
    <location>
        <position position="230"/>
    </location>
</feature>
<feature type="glycosylation site" description="N-linked (GlcNAc...) asparagine; by host" evidence="2">
    <location>
        <position position="235"/>
    </location>
</feature>
<feature type="glycosylation site" description="N-linked (GlcNAc...) asparagine; by host" evidence="2">
    <location>
        <position position="321"/>
    </location>
</feature>
<feature type="glycosylation site" description="N-linked (GlcNAc...) asparagine; by host" evidence="2">
    <location>
        <position position="328"/>
    </location>
</feature>
<feature type="glycosylation site" description="N-linked (GlcNAc...) asparagine; by host" evidence="2">
    <location>
        <position position="388"/>
    </location>
</feature>
<feature type="glycosylation site" description="N-linked (GlcNAc...) asparagine; by host" evidence="2">
    <location>
        <position position="438"/>
    </location>
</feature>
<feature type="sequence conflict" description="In Ref. 2; AAA20666." evidence="5" ref="2">
    <original>PRLK</original>
    <variation>SKLR</variation>
    <location>
        <begin position="242"/>
        <end position="245"/>
    </location>
</feature>
<feature type="sequence conflict" description="In Ref. 2; AAA20666." evidence="5" ref="2">
    <original>V</original>
    <variation>M</variation>
    <location>
        <position position="282"/>
    </location>
</feature>
<organismHost>
    <name type="scientific">Bos taurus</name>
    <name type="common">Bovine</name>
    <dbReference type="NCBI Taxonomy" id="9913"/>
</organismHost>
<organismHost>
    <name type="scientific">Bradypodidae</name>
    <name type="common">three-fingered sloths</name>
    <dbReference type="NCBI Taxonomy" id="9352"/>
</organismHost>
<organismHost>
    <name type="scientific">Capra hircus</name>
    <name type="common">Goat</name>
    <dbReference type="NCBI Taxonomy" id="9925"/>
</organismHost>
<organismHost>
    <name type="scientific">Cervidae</name>
    <name type="common">Deer</name>
    <dbReference type="NCBI Taxonomy" id="9850"/>
</organismHost>
<organismHost>
    <name type="scientific">Crocidura leucodon</name>
    <name type="common">Bicoloured white-toothed shrew</name>
    <name type="synonym">Celebes shrew</name>
    <dbReference type="NCBI Taxonomy" id="109474"/>
</organismHost>
<organismHost>
    <name type="scientific">Equidae</name>
    <name type="common">horses</name>
    <dbReference type="NCBI Taxonomy" id="9788"/>
</organismHost>
<organismHost>
    <name type="scientific">Felis catus</name>
    <name type="common">Cat</name>
    <name type="synonym">Felis silvestris catus</name>
    <dbReference type="NCBI Taxonomy" id="9685"/>
</organismHost>
<organismHost>
    <name type="scientific">Hexaprotodon liberiensis</name>
    <name type="common">Pygmy hippopotamus</name>
    <name type="synonym">Choeropsis liberiensis</name>
    <dbReference type="NCBI Taxonomy" id="56798"/>
</organismHost>
<organismHost>
    <name type="scientific">Lama glama</name>
    <name type="common">Llama</name>
    <dbReference type="NCBI Taxonomy" id="9844"/>
</organismHost>
<organismHost>
    <name type="scientific">Oryctolagus cuniculus</name>
    <name type="common">Rabbit</name>
    <dbReference type="NCBI Taxonomy" id="9986"/>
</organismHost>
<organismHost>
    <name type="scientific">Ovis aries</name>
    <name type="common">Sheep</name>
    <dbReference type="NCBI Taxonomy" id="9940"/>
</organismHost>
<organismHost>
    <name type="scientific">Struthio camelus</name>
    <name type="common">Common ostrich</name>
    <dbReference type="NCBI Taxonomy" id="8801"/>
</organismHost>
<organismHost>
    <name type="scientific">Varecia variegata</name>
    <name type="common">Black-and-white ruffed lemur</name>
    <name type="synonym">Lemur variegatus</name>
    <dbReference type="NCBI Taxonomy" id="9455"/>
</organismHost>
<organismHost>
    <name type="scientific">Vicugna pacos</name>
    <name type="common">Alpaca</name>
    <name type="synonym">Lama pacos</name>
    <dbReference type="NCBI Taxonomy" id="30538"/>
</organismHost>
<protein>
    <recommendedName>
        <fullName>Envelope glycoprotein p57</fullName>
    </recommendedName>
    <alternativeName>
        <fullName>gp84</fullName>
    </alternativeName>
    <alternativeName>
        <fullName>gp94</fullName>
    </alternativeName>
    <component>
        <recommendedName>
            <fullName>Envelope glycoprotein p27</fullName>
        </recommendedName>
    </component>
    <component>
        <recommendedName>
            <fullName>Envelope glycoprotein p29</fullName>
        </recommendedName>
    </component>
</protein>
<evidence type="ECO:0000250" key="1">
    <source>
        <dbReference type="UniProtKB" id="P52638"/>
    </source>
</evidence>
<evidence type="ECO:0000255" key="2"/>
<evidence type="ECO:0000269" key="3">
    <source>
    </source>
</evidence>
<evidence type="ECO:0000269" key="4">
    <source>
    </source>
</evidence>
<evidence type="ECO:0000305" key="5"/>
<dbReference type="EMBL" id="L27077">
    <property type="protein sequence ID" value="AAA20666.1"/>
    <property type="molecule type" value="Genomic_RNA"/>
</dbReference>
<dbReference type="EMBL" id="AY066023">
    <property type="protein sequence ID" value="AAL49985.1"/>
    <property type="molecule type" value="Genomic_RNA"/>
</dbReference>
<dbReference type="GlyCosmos" id="Q8BB27">
    <property type="glycosylation" value="13 sites, No reported glycans"/>
</dbReference>
<dbReference type="Proteomes" id="UP000185272">
    <property type="component" value="Genome"/>
</dbReference>
<dbReference type="GO" id="GO:0044167">
    <property type="term" value="C:host cell endoplasmic reticulum membrane"/>
    <property type="evidence" value="ECO:0007669"/>
    <property type="project" value="UniProtKB-SubCell"/>
</dbReference>
<dbReference type="GO" id="GO:0020002">
    <property type="term" value="C:host cell plasma membrane"/>
    <property type="evidence" value="ECO:0007669"/>
    <property type="project" value="UniProtKB-SubCell"/>
</dbReference>
<dbReference type="GO" id="GO:0016020">
    <property type="term" value="C:membrane"/>
    <property type="evidence" value="ECO:0007669"/>
    <property type="project" value="UniProtKB-KW"/>
</dbReference>
<dbReference type="GO" id="GO:0019031">
    <property type="term" value="C:viral envelope"/>
    <property type="evidence" value="ECO:0007669"/>
    <property type="project" value="UniProtKB-KW"/>
</dbReference>
<dbReference type="GO" id="GO:0075512">
    <property type="term" value="P:clathrin-dependent endocytosis of virus by host cell"/>
    <property type="evidence" value="ECO:0007669"/>
    <property type="project" value="UniProtKB-KW"/>
</dbReference>
<dbReference type="GO" id="GO:0039654">
    <property type="term" value="P:fusion of virus membrane with host endosome membrane"/>
    <property type="evidence" value="ECO:0007669"/>
    <property type="project" value="UniProtKB-KW"/>
</dbReference>
<dbReference type="GO" id="GO:0019062">
    <property type="term" value="P:virion attachment to host cell"/>
    <property type="evidence" value="ECO:0007669"/>
    <property type="project" value="UniProtKB-KW"/>
</dbReference>
<dbReference type="InterPro" id="IPR009344">
    <property type="entry name" value="BDV_G"/>
</dbReference>
<dbReference type="Pfam" id="PF06208">
    <property type="entry name" value="BDV_G"/>
    <property type="match status" value="1"/>
</dbReference>
<name>VGLG_BDV1</name>